<organism>
    <name type="scientific">Bacillus subtilis (strain 168)</name>
    <dbReference type="NCBI Taxonomy" id="224308"/>
    <lineage>
        <taxon>Bacteria</taxon>
        <taxon>Bacillati</taxon>
        <taxon>Bacillota</taxon>
        <taxon>Bacilli</taxon>
        <taxon>Bacillales</taxon>
        <taxon>Bacillaceae</taxon>
        <taxon>Bacillus</taxon>
    </lineage>
</organism>
<gene>
    <name type="primary">ycgF</name>
    <name type="ordered locus">BSU03090</name>
</gene>
<name>YCGF_BACSU</name>
<reference key="1">
    <citation type="journal article" date="1996" name="Microbiology">
        <title>The 25 degrees-36 degrees region of the Bacillus subtilis chromosome: determination of the sequence of a 146 kb segment and identification of 113 genes.</title>
        <authorList>
            <person name="Yamane K."/>
            <person name="Kumano M."/>
            <person name="Kurita K."/>
        </authorList>
    </citation>
    <scope>NUCLEOTIDE SEQUENCE [GENOMIC DNA]</scope>
    <source>
        <strain>168</strain>
    </source>
</reference>
<reference key="2">
    <citation type="journal article" date="1997" name="Nature">
        <title>The complete genome sequence of the Gram-positive bacterium Bacillus subtilis.</title>
        <authorList>
            <person name="Kunst F."/>
            <person name="Ogasawara N."/>
            <person name="Moszer I."/>
            <person name="Albertini A.M."/>
            <person name="Alloni G."/>
            <person name="Azevedo V."/>
            <person name="Bertero M.G."/>
            <person name="Bessieres P."/>
            <person name="Bolotin A."/>
            <person name="Borchert S."/>
            <person name="Borriss R."/>
            <person name="Boursier L."/>
            <person name="Brans A."/>
            <person name="Braun M."/>
            <person name="Brignell S.C."/>
            <person name="Bron S."/>
            <person name="Brouillet S."/>
            <person name="Bruschi C.V."/>
            <person name="Caldwell B."/>
            <person name="Capuano V."/>
            <person name="Carter N.M."/>
            <person name="Choi S.-K."/>
            <person name="Codani J.-J."/>
            <person name="Connerton I.F."/>
            <person name="Cummings N.J."/>
            <person name="Daniel R.A."/>
            <person name="Denizot F."/>
            <person name="Devine K.M."/>
            <person name="Duesterhoeft A."/>
            <person name="Ehrlich S.D."/>
            <person name="Emmerson P.T."/>
            <person name="Entian K.-D."/>
            <person name="Errington J."/>
            <person name="Fabret C."/>
            <person name="Ferrari E."/>
            <person name="Foulger D."/>
            <person name="Fritz C."/>
            <person name="Fujita M."/>
            <person name="Fujita Y."/>
            <person name="Fuma S."/>
            <person name="Galizzi A."/>
            <person name="Galleron N."/>
            <person name="Ghim S.-Y."/>
            <person name="Glaser P."/>
            <person name="Goffeau A."/>
            <person name="Golightly E.J."/>
            <person name="Grandi G."/>
            <person name="Guiseppi G."/>
            <person name="Guy B.J."/>
            <person name="Haga K."/>
            <person name="Haiech J."/>
            <person name="Harwood C.R."/>
            <person name="Henaut A."/>
            <person name="Hilbert H."/>
            <person name="Holsappel S."/>
            <person name="Hosono S."/>
            <person name="Hullo M.-F."/>
            <person name="Itaya M."/>
            <person name="Jones L.-M."/>
            <person name="Joris B."/>
            <person name="Karamata D."/>
            <person name="Kasahara Y."/>
            <person name="Klaerr-Blanchard M."/>
            <person name="Klein C."/>
            <person name="Kobayashi Y."/>
            <person name="Koetter P."/>
            <person name="Koningstein G."/>
            <person name="Krogh S."/>
            <person name="Kumano M."/>
            <person name="Kurita K."/>
            <person name="Lapidus A."/>
            <person name="Lardinois S."/>
            <person name="Lauber J."/>
            <person name="Lazarevic V."/>
            <person name="Lee S.-M."/>
            <person name="Levine A."/>
            <person name="Liu H."/>
            <person name="Masuda S."/>
            <person name="Mauel C."/>
            <person name="Medigue C."/>
            <person name="Medina N."/>
            <person name="Mellado R.P."/>
            <person name="Mizuno M."/>
            <person name="Moestl D."/>
            <person name="Nakai S."/>
            <person name="Noback M."/>
            <person name="Noone D."/>
            <person name="O'Reilly M."/>
            <person name="Ogawa K."/>
            <person name="Ogiwara A."/>
            <person name="Oudega B."/>
            <person name="Park S.-H."/>
            <person name="Parro V."/>
            <person name="Pohl T.M."/>
            <person name="Portetelle D."/>
            <person name="Porwollik S."/>
            <person name="Prescott A.M."/>
            <person name="Presecan E."/>
            <person name="Pujic P."/>
            <person name="Purnelle B."/>
            <person name="Rapoport G."/>
            <person name="Rey M."/>
            <person name="Reynolds S."/>
            <person name="Rieger M."/>
            <person name="Rivolta C."/>
            <person name="Rocha E."/>
            <person name="Roche B."/>
            <person name="Rose M."/>
            <person name="Sadaie Y."/>
            <person name="Sato T."/>
            <person name="Scanlan E."/>
            <person name="Schleich S."/>
            <person name="Schroeter R."/>
            <person name="Scoffone F."/>
            <person name="Sekiguchi J."/>
            <person name="Sekowska A."/>
            <person name="Seror S.J."/>
            <person name="Serror P."/>
            <person name="Shin B.-S."/>
            <person name="Soldo B."/>
            <person name="Sorokin A."/>
            <person name="Tacconi E."/>
            <person name="Takagi T."/>
            <person name="Takahashi H."/>
            <person name="Takemaru K."/>
            <person name="Takeuchi M."/>
            <person name="Tamakoshi A."/>
            <person name="Tanaka T."/>
            <person name="Terpstra P."/>
            <person name="Tognoni A."/>
            <person name="Tosato V."/>
            <person name="Uchiyama S."/>
            <person name="Vandenbol M."/>
            <person name="Vannier F."/>
            <person name="Vassarotti A."/>
            <person name="Viari A."/>
            <person name="Wambutt R."/>
            <person name="Wedler E."/>
            <person name="Wedler H."/>
            <person name="Weitzenegger T."/>
            <person name="Winters P."/>
            <person name="Wipat A."/>
            <person name="Yamamoto H."/>
            <person name="Yamane K."/>
            <person name="Yasumoto K."/>
            <person name="Yata K."/>
            <person name="Yoshida K."/>
            <person name="Yoshikawa H.-F."/>
            <person name="Zumstein E."/>
            <person name="Yoshikawa H."/>
            <person name="Danchin A."/>
        </authorList>
    </citation>
    <scope>NUCLEOTIDE SEQUENCE [LARGE SCALE GENOMIC DNA]</scope>
    <source>
        <strain>168</strain>
    </source>
</reference>
<feature type="chain" id="PRO_0000359970" description="Putative amino acid efflux protein YcgF">
    <location>
        <begin position="1"/>
        <end position="209"/>
    </location>
</feature>
<feature type="transmembrane region" description="Helical" evidence="1">
    <location>
        <begin position="1"/>
        <end position="21"/>
    </location>
</feature>
<feature type="transmembrane region" description="Helical" evidence="1">
    <location>
        <begin position="39"/>
        <end position="59"/>
    </location>
</feature>
<feature type="transmembrane region" description="Helical" evidence="1">
    <location>
        <begin position="62"/>
        <end position="82"/>
    </location>
</feature>
<feature type="transmembrane region" description="Helical" evidence="1">
    <location>
        <begin position="110"/>
        <end position="130"/>
    </location>
</feature>
<feature type="transmembrane region" description="Helical" evidence="1">
    <location>
        <begin position="147"/>
        <end position="167"/>
    </location>
</feature>
<feature type="transmembrane region" description="Helical" evidence="1">
    <location>
        <begin position="184"/>
        <end position="204"/>
    </location>
</feature>
<evidence type="ECO:0000255" key="1"/>
<evidence type="ECO:0000305" key="2"/>
<comment type="subcellular location">
    <subcellularLocation>
        <location evidence="2">Cell membrane</location>
        <topology evidence="2">Multi-pass membrane protein</topology>
    </subcellularLocation>
</comment>
<comment type="similarity">
    <text evidence="2">Belongs to the Rht family.</text>
</comment>
<comment type="sequence caution" evidence="2">
    <conflict type="erroneous initiation">
        <sequence resource="EMBL-CDS" id="BAA08943"/>
    </conflict>
</comment>
<sequence>MNIFLSYIVLGLSLSAPVGPVNAAQIDKGIKNGFWHAWIFGLGAMTADGLYMLFIYFGLSQFLTAPFVKTFLWLFGFFVLTYTGIETLKNVREPMDVRSSRGKPSYRKTFASGFLISLSNPLSILFWLGIYGSILAKTAEAYNMNQLLIYSSGIMIGILIWDFCMAITASTFRNLLHEKLLRGLTGIAGVSLLVFGFYFGYQGIKQLLG</sequence>
<keyword id="KW-1003">Cell membrane</keyword>
<keyword id="KW-0472">Membrane</keyword>
<keyword id="KW-1185">Reference proteome</keyword>
<keyword id="KW-0812">Transmembrane</keyword>
<keyword id="KW-1133">Transmembrane helix</keyword>
<proteinExistence type="inferred from homology"/>
<dbReference type="EMBL" id="D50453">
    <property type="protein sequence ID" value="BAA08943.1"/>
    <property type="status" value="ALT_INIT"/>
    <property type="molecule type" value="Genomic_DNA"/>
</dbReference>
<dbReference type="EMBL" id="AL009126">
    <property type="protein sequence ID" value="CAB12103.1"/>
    <property type="molecule type" value="Genomic_DNA"/>
</dbReference>
<dbReference type="PIR" id="A69758">
    <property type="entry name" value="A69758"/>
</dbReference>
<dbReference type="RefSeq" id="NP_388191.1">
    <property type="nucleotide sequence ID" value="NC_000964.3"/>
</dbReference>
<dbReference type="RefSeq" id="WP_003246469.1">
    <property type="nucleotide sequence ID" value="NZ_OZ025638.1"/>
</dbReference>
<dbReference type="FunCoup" id="P94381">
    <property type="interactions" value="126"/>
</dbReference>
<dbReference type="STRING" id="224308.BSU03090"/>
<dbReference type="PaxDb" id="224308-BSU03090"/>
<dbReference type="EnsemblBacteria" id="CAB12103">
    <property type="protein sequence ID" value="CAB12103"/>
    <property type="gene ID" value="BSU_03090"/>
</dbReference>
<dbReference type="GeneID" id="938349"/>
<dbReference type="KEGG" id="bsu:BSU03090"/>
<dbReference type="PATRIC" id="fig|224308.179.peg.323"/>
<dbReference type="eggNOG" id="COG1280">
    <property type="taxonomic scope" value="Bacteria"/>
</dbReference>
<dbReference type="InParanoid" id="P94381"/>
<dbReference type="OrthoDB" id="7874789at2"/>
<dbReference type="PhylomeDB" id="P94381"/>
<dbReference type="BioCyc" id="BSUB:BSU03090-MONOMER"/>
<dbReference type="Proteomes" id="UP000001570">
    <property type="component" value="Chromosome"/>
</dbReference>
<dbReference type="GO" id="GO:0005886">
    <property type="term" value="C:plasma membrane"/>
    <property type="evidence" value="ECO:0000318"/>
    <property type="project" value="GO_Central"/>
</dbReference>
<dbReference type="GO" id="GO:0015171">
    <property type="term" value="F:amino acid transmembrane transporter activity"/>
    <property type="evidence" value="ECO:0000318"/>
    <property type="project" value="GO_Central"/>
</dbReference>
<dbReference type="GO" id="GO:0006865">
    <property type="term" value="P:amino acid transport"/>
    <property type="evidence" value="ECO:0000318"/>
    <property type="project" value="GO_Central"/>
</dbReference>
<dbReference type="InterPro" id="IPR001123">
    <property type="entry name" value="LeuE-type"/>
</dbReference>
<dbReference type="PANTHER" id="PTHR30086:SF6">
    <property type="entry name" value="AMINO ACID EFFLUX PROTEIN YCGF-RELATED"/>
    <property type="match status" value="1"/>
</dbReference>
<dbReference type="PANTHER" id="PTHR30086">
    <property type="entry name" value="ARGININE EXPORTER PROTEIN ARGO"/>
    <property type="match status" value="1"/>
</dbReference>
<dbReference type="Pfam" id="PF01810">
    <property type="entry name" value="LysE"/>
    <property type="match status" value="1"/>
</dbReference>
<accession>P94381</accession>
<accession>Q79F35</accession>
<protein>
    <recommendedName>
        <fullName>Putative amino acid efflux protein YcgF</fullName>
    </recommendedName>
</protein>